<keyword id="KW-0997">Cell inner membrane</keyword>
<keyword id="KW-1003">Cell membrane</keyword>
<keyword id="KW-0249">Electron transport</keyword>
<keyword id="KW-0472">Membrane</keyword>
<keyword id="KW-1185">Reference proteome</keyword>
<keyword id="KW-1278">Translocase</keyword>
<keyword id="KW-0812">Transmembrane</keyword>
<keyword id="KW-1133">Transmembrane helix</keyword>
<keyword id="KW-0813">Transport</keyword>
<feature type="chain" id="PRO_1000014101" description="Ion-translocating oxidoreductase complex subunit E">
    <location>
        <begin position="1"/>
        <end position="231"/>
    </location>
</feature>
<feature type="transmembrane region" description="Helical" evidence="1">
    <location>
        <begin position="18"/>
        <end position="38"/>
    </location>
</feature>
<feature type="transmembrane region" description="Helical" evidence="1">
    <location>
        <begin position="39"/>
        <end position="59"/>
    </location>
</feature>
<feature type="transmembrane region" description="Helical" evidence="1">
    <location>
        <begin position="69"/>
        <end position="89"/>
    </location>
</feature>
<feature type="transmembrane region" description="Helical" evidence="1">
    <location>
        <begin position="93"/>
        <end position="113"/>
    </location>
</feature>
<feature type="transmembrane region" description="Helical" evidence="1">
    <location>
        <begin position="127"/>
        <end position="147"/>
    </location>
</feature>
<feature type="transmembrane region" description="Helical" evidence="1">
    <location>
        <begin position="157"/>
        <end position="177"/>
    </location>
</feature>
<feature type="transmembrane region" description="Helical" evidence="1">
    <location>
        <begin position="182"/>
        <end position="202"/>
    </location>
</feature>
<reference key="1">
    <citation type="submission" date="2006-08" db="EMBL/GenBank/DDBJ databases">
        <title>Complete sequence of Shewanella frigidimarina NCIMB 400.</title>
        <authorList>
            <consortium name="US DOE Joint Genome Institute"/>
            <person name="Copeland A."/>
            <person name="Lucas S."/>
            <person name="Lapidus A."/>
            <person name="Barry K."/>
            <person name="Detter J.C."/>
            <person name="Glavina del Rio T."/>
            <person name="Hammon N."/>
            <person name="Israni S."/>
            <person name="Dalin E."/>
            <person name="Tice H."/>
            <person name="Pitluck S."/>
            <person name="Fredrickson J.K."/>
            <person name="Kolker E."/>
            <person name="McCuel L.A."/>
            <person name="DiChristina T."/>
            <person name="Nealson K.H."/>
            <person name="Newman D."/>
            <person name="Tiedje J.M."/>
            <person name="Zhou J."/>
            <person name="Romine M.F."/>
            <person name="Culley D.E."/>
            <person name="Serres M."/>
            <person name="Chertkov O."/>
            <person name="Brettin T."/>
            <person name="Bruce D."/>
            <person name="Han C."/>
            <person name="Tapia R."/>
            <person name="Gilna P."/>
            <person name="Schmutz J."/>
            <person name="Larimer F."/>
            <person name="Land M."/>
            <person name="Hauser L."/>
            <person name="Kyrpides N."/>
            <person name="Mikhailova N."/>
            <person name="Richardson P."/>
        </authorList>
    </citation>
    <scope>NUCLEOTIDE SEQUENCE [LARGE SCALE GENOMIC DNA]</scope>
    <source>
        <strain>NCIMB 400</strain>
    </source>
</reference>
<gene>
    <name evidence="1" type="primary">rnfE</name>
    <name type="ordered locus">Sfri_2177</name>
</gene>
<dbReference type="EC" id="7.-.-.-" evidence="1"/>
<dbReference type="EMBL" id="CP000447">
    <property type="protein sequence ID" value="ABI72023.1"/>
    <property type="molecule type" value="Genomic_DNA"/>
</dbReference>
<dbReference type="RefSeq" id="WP_011637633.1">
    <property type="nucleotide sequence ID" value="NC_008345.1"/>
</dbReference>
<dbReference type="SMR" id="Q081P2"/>
<dbReference type="STRING" id="318167.Sfri_2177"/>
<dbReference type="KEGG" id="sfr:Sfri_2177"/>
<dbReference type="eggNOG" id="COG4660">
    <property type="taxonomic scope" value="Bacteria"/>
</dbReference>
<dbReference type="HOGENOM" id="CLU_046659_1_0_6"/>
<dbReference type="OrthoDB" id="9782945at2"/>
<dbReference type="Proteomes" id="UP000000684">
    <property type="component" value="Chromosome"/>
</dbReference>
<dbReference type="GO" id="GO:0005886">
    <property type="term" value="C:plasma membrane"/>
    <property type="evidence" value="ECO:0007669"/>
    <property type="project" value="UniProtKB-SubCell"/>
</dbReference>
<dbReference type="GO" id="GO:0022900">
    <property type="term" value="P:electron transport chain"/>
    <property type="evidence" value="ECO:0007669"/>
    <property type="project" value="UniProtKB-UniRule"/>
</dbReference>
<dbReference type="HAMAP" id="MF_00478">
    <property type="entry name" value="RsxE_RnfE"/>
    <property type="match status" value="1"/>
</dbReference>
<dbReference type="InterPro" id="IPR003667">
    <property type="entry name" value="NqrDE/RnfAE"/>
</dbReference>
<dbReference type="InterPro" id="IPR010968">
    <property type="entry name" value="RnfE"/>
</dbReference>
<dbReference type="NCBIfam" id="NF009070">
    <property type="entry name" value="PRK12405.1"/>
    <property type="match status" value="1"/>
</dbReference>
<dbReference type="NCBIfam" id="TIGR01948">
    <property type="entry name" value="rnfE"/>
    <property type="match status" value="1"/>
</dbReference>
<dbReference type="PANTHER" id="PTHR30586">
    <property type="entry name" value="ELECTRON TRANSPORT COMPLEX PROTEIN RNFE"/>
    <property type="match status" value="1"/>
</dbReference>
<dbReference type="PANTHER" id="PTHR30586:SF0">
    <property type="entry name" value="ION-TRANSLOCATING OXIDOREDUCTASE COMPLEX SUBUNIT E"/>
    <property type="match status" value="1"/>
</dbReference>
<dbReference type="Pfam" id="PF02508">
    <property type="entry name" value="Rnf-Nqr"/>
    <property type="match status" value="1"/>
</dbReference>
<dbReference type="PIRSF" id="PIRSF006102">
    <property type="entry name" value="NQR_DE"/>
    <property type="match status" value="1"/>
</dbReference>
<organism>
    <name type="scientific">Shewanella frigidimarina (strain NCIMB 400)</name>
    <dbReference type="NCBI Taxonomy" id="318167"/>
    <lineage>
        <taxon>Bacteria</taxon>
        <taxon>Pseudomonadati</taxon>
        <taxon>Pseudomonadota</taxon>
        <taxon>Gammaproteobacteria</taxon>
        <taxon>Alteromonadales</taxon>
        <taxon>Shewanellaceae</taxon>
        <taxon>Shewanella</taxon>
    </lineage>
</organism>
<proteinExistence type="inferred from homology"/>
<accession>Q081P2</accession>
<evidence type="ECO:0000255" key="1">
    <source>
        <dbReference type="HAMAP-Rule" id="MF_00478"/>
    </source>
</evidence>
<comment type="function">
    <text evidence="1">Part of a membrane-bound complex that couples electron transfer with translocation of ions across the membrane.</text>
</comment>
<comment type="subunit">
    <text evidence="1">The complex is composed of six subunits: RnfA, RnfB, RnfC, RnfD, RnfE and RnfG.</text>
</comment>
<comment type="subcellular location">
    <subcellularLocation>
        <location evidence="1">Cell inner membrane</location>
        <topology evidence="1">Multi-pass membrane protein</topology>
    </subcellularLocation>
</comment>
<comment type="similarity">
    <text evidence="1">Belongs to the NqrDE/RnfAE family.</text>
</comment>
<name>RNFE_SHEFN</name>
<protein>
    <recommendedName>
        <fullName evidence="1">Ion-translocating oxidoreductase complex subunit E</fullName>
        <ecNumber evidence="1">7.-.-.-</ecNumber>
    </recommendedName>
    <alternativeName>
        <fullName evidence="1">Rnf electron transport complex subunit E</fullName>
    </alternativeName>
</protein>
<sequence>MSKYSEIAAQGLWKNNPGLVQLLGLCPLLAVTATITNALGLGVATLLVLIGSNVLVSLVRDFVPKEIRIPVFVMIIAALVTCVQLLINAYAYNLYLSLGIFLPLIVTNCVIIGRAEAFASRNSLAHSAFDGLMMGLGFTAVLVVLGASRELLGQGTLFGGADLLLGDWASVLTIHVWHVDTPFLLAMLPPGAFIGMGLLIALKNVIDSRVNAMQPKVESVSVTRARITKVN</sequence>